<keyword id="KW-0963">Cytoplasm</keyword>
<keyword id="KW-0210">Decarboxylase</keyword>
<keyword id="KW-0456">Lyase</keyword>
<keyword id="KW-0627">Porphyrin biosynthesis</keyword>
<comment type="function">
    <text evidence="1">Catalyzes the decarboxylation of four acetate groups of uroporphyrinogen-III to yield coproporphyrinogen-III.</text>
</comment>
<comment type="catalytic activity">
    <reaction evidence="1">
        <text>uroporphyrinogen III + 4 H(+) = coproporphyrinogen III + 4 CO2</text>
        <dbReference type="Rhea" id="RHEA:19865"/>
        <dbReference type="ChEBI" id="CHEBI:15378"/>
        <dbReference type="ChEBI" id="CHEBI:16526"/>
        <dbReference type="ChEBI" id="CHEBI:57308"/>
        <dbReference type="ChEBI" id="CHEBI:57309"/>
        <dbReference type="EC" id="4.1.1.37"/>
    </reaction>
</comment>
<comment type="pathway">
    <text evidence="1">Porphyrin-containing compound metabolism; protoporphyrin-IX biosynthesis; coproporphyrinogen-III from 5-aminolevulinate: step 4/4.</text>
</comment>
<comment type="subunit">
    <text evidence="1">Homodimer.</text>
</comment>
<comment type="subcellular location">
    <subcellularLocation>
        <location evidence="1">Cytoplasm</location>
    </subcellularLocation>
</comment>
<comment type="similarity">
    <text evidence="1">Belongs to the uroporphyrinogen decarboxylase family.</text>
</comment>
<proteinExistence type="inferred from homology"/>
<sequence>MTELKNDRYLRALLRQPVDVTPVWMMRQAGRYLPEYKATRAQAGDFMSLCKNAELACEVTLQPLRRYPLDAAILFSDILTVPDAMGLGLYFEAGEGPRFTSPVTCKADVDKLPIPDPEDELGYVMNAVRTIRRELKGEVPLIGFSGSPWTLATYMVEGGSSKAFTVIKKMMYADPQALHALLDKLAKSVTLYLNAQIKAGAQAVMIFDTWGGVLTGRDYQQFSLYYMHKIVDGLLRENDGRRVPVTLFTKGGGQWLEAMAETGCDALGLDWTTDIADARRRVGNKVALQGNMDPSMLYAPPARIEEEVATILAGFGHGEGHVFNLGHGIHQDVPPEHAGVFVEAVHRLSEQYHR</sequence>
<feature type="chain" id="PRO_1000197518" description="Uroporphyrinogen decarboxylase">
    <location>
        <begin position="1"/>
        <end position="354"/>
    </location>
</feature>
<feature type="binding site" evidence="1">
    <location>
        <begin position="27"/>
        <end position="31"/>
    </location>
    <ligand>
        <name>substrate</name>
    </ligand>
</feature>
<feature type="binding site" evidence="1">
    <location>
        <position position="77"/>
    </location>
    <ligand>
        <name>substrate</name>
    </ligand>
</feature>
<feature type="binding site" evidence="1">
    <location>
        <position position="154"/>
    </location>
    <ligand>
        <name>substrate</name>
    </ligand>
</feature>
<feature type="binding site" evidence="1">
    <location>
        <position position="209"/>
    </location>
    <ligand>
        <name>substrate</name>
    </ligand>
</feature>
<feature type="binding site" evidence="1">
    <location>
        <position position="327"/>
    </location>
    <ligand>
        <name>substrate</name>
    </ligand>
</feature>
<feature type="site" description="Transition state stabilizer" evidence="1">
    <location>
        <position position="77"/>
    </location>
</feature>
<organism>
    <name type="scientific">Escherichia coli (strain SMS-3-5 / SECEC)</name>
    <dbReference type="NCBI Taxonomy" id="439855"/>
    <lineage>
        <taxon>Bacteria</taxon>
        <taxon>Pseudomonadati</taxon>
        <taxon>Pseudomonadota</taxon>
        <taxon>Gammaproteobacteria</taxon>
        <taxon>Enterobacterales</taxon>
        <taxon>Enterobacteriaceae</taxon>
        <taxon>Escherichia</taxon>
    </lineage>
</organism>
<accession>B1LNU9</accession>
<dbReference type="EC" id="4.1.1.37" evidence="1"/>
<dbReference type="EMBL" id="CP000970">
    <property type="protein sequence ID" value="ACB19350.1"/>
    <property type="molecule type" value="Genomic_DNA"/>
</dbReference>
<dbReference type="RefSeq" id="WP_000137657.1">
    <property type="nucleotide sequence ID" value="NC_010498.1"/>
</dbReference>
<dbReference type="SMR" id="B1LNU9"/>
<dbReference type="GeneID" id="93777897"/>
<dbReference type="KEGG" id="ecm:EcSMS35_4445"/>
<dbReference type="HOGENOM" id="CLU_040933_0_0_6"/>
<dbReference type="UniPathway" id="UPA00251">
    <property type="reaction ID" value="UER00321"/>
</dbReference>
<dbReference type="Proteomes" id="UP000007011">
    <property type="component" value="Chromosome"/>
</dbReference>
<dbReference type="GO" id="GO:0005829">
    <property type="term" value="C:cytosol"/>
    <property type="evidence" value="ECO:0007669"/>
    <property type="project" value="TreeGrafter"/>
</dbReference>
<dbReference type="GO" id="GO:0004853">
    <property type="term" value="F:uroporphyrinogen decarboxylase activity"/>
    <property type="evidence" value="ECO:0007669"/>
    <property type="project" value="UniProtKB-UniRule"/>
</dbReference>
<dbReference type="GO" id="GO:0019353">
    <property type="term" value="P:protoporphyrinogen IX biosynthetic process from glutamate"/>
    <property type="evidence" value="ECO:0007669"/>
    <property type="project" value="TreeGrafter"/>
</dbReference>
<dbReference type="CDD" id="cd00717">
    <property type="entry name" value="URO-D"/>
    <property type="match status" value="1"/>
</dbReference>
<dbReference type="FunFam" id="3.20.20.210:FF:000001">
    <property type="entry name" value="Uroporphyrinogen decarboxylase"/>
    <property type="match status" value="1"/>
</dbReference>
<dbReference type="Gene3D" id="3.20.20.210">
    <property type="match status" value="1"/>
</dbReference>
<dbReference type="HAMAP" id="MF_00218">
    <property type="entry name" value="URO_D"/>
    <property type="match status" value="1"/>
</dbReference>
<dbReference type="InterPro" id="IPR038071">
    <property type="entry name" value="UROD/MetE-like_sf"/>
</dbReference>
<dbReference type="InterPro" id="IPR006361">
    <property type="entry name" value="Uroporphyrinogen_deCO2ase_HemE"/>
</dbReference>
<dbReference type="InterPro" id="IPR000257">
    <property type="entry name" value="Uroporphyrinogen_deCOase"/>
</dbReference>
<dbReference type="NCBIfam" id="TIGR01464">
    <property type="entry name" value="hemE"/>
    <property type="match status" value="1"/>
</dbReference>
<dbReference type="PANTHER" id="PTHR21091">
    <property type="entry name" value="METHYLTETRAHYDROFOLATE:HOMOCYSTEINE METHYLTRANSFERASE RELATED"/>
    <property type="match status" value="1"/>
</dbReference>
<dbReference type="PANTHER" id="PTHR21091:SF169">
    <property type="entry name" value="UROPORPHYRINOGEN DECARBOXYLASE"/>
    <property type="match status" value="1"/>
</dbReference>
<dbReference type="Pfam" id="PF01208">
    <property type="entry name" value="URO-D"/>
    <property type="match status" value="1"/>
</dbReference>
<dbReference type="SUPFAM" id="SSF51726">
    <property type="entry name" value="UROD/MetE-like"/>
    <property type="match status" value="1"/>
</dbReference>
<dbReference type="PROSITE" id="PS00906">
    <property type="entry name" value="UROD_1"/>
    <property type="match status" value="1"/>
</dbReference>
<dbReference type="PROSITE" id="PS00907">
    <property type="entry name" value="UROD_2"/>
    <property type="match status" value="1"/>
</dbReference>
<evidence type="ECO:0000255" key="1">
    <source>
        <dbReference type="HAMAP-Rule" id="MF_00218"/>
    </source>
</evidence>
<name>DCUP_ECOSM</name>
<gene>
    <name evidence="1" type="primary">hemE</name>
    <name type="ordered locus">EcSMS35_4445</name>
</gene>
<protein>
    <recommendedName>
        <fullName evidence="1">Uroporphyrinogen decarboxylase</fullName>
        <shortName evidence="1">UPD</shortName>
        <shortName evidence="1">URO-D</shortName>
        <ecNumber evidence="1">4.1.1.37</ecNumber>
    </recommendedName>
</protein>
<reference key="1">
    <citation type="journal article" date="2008" name="J. Bacteriol.">
        <title>Insights into the environmental resistance gene pool from the genome sequence of the multidrug-resistant environmental isolate Escherichia coli SMS-3-5.</title>
        <authorList>
            <person name="Fricke W.F."/>
            <person name="Wright M.S."/>
            <person name="Lindell A.H."/>
            <person name="Harkins D.M."/>
            <person name="Baker-Austin C."/>
            <person name="Ravel J."/>
            <person name="Stepanauskas R."/>
        </authorList>
    </citation>
    <scope>NUCLEOTIDE SEQUENCE [LARGE SCALE GENOMIC DNA]</scope>
    <source>
        <strain>SMS-3-5 / SECEC</strain>
    </source>
</reference>